<keyword id="KW-0963">Cytoplasm</keyword>
<keyword id="KW-0217">Developmental protein</keyword>
<keyword id="KW-0903">Direct protein sequencing</keyword>
<keyword id="KW-0238">DNA-binding</keyword>
<keyword id="KW-0256">Endoplasmic reticulum</keyword>
<keyword id="KW-0509">mRNA transport</keyword>
<keyword id="KW-0539">Nucleus</keyword>
<keyword id="KW-1185">Reference proteome</keyword>
<keyword id="KW-0677">Repeat</keyword>
<keyword id="KW-0694">RNA-binding</keyword>
<keyword id="KW-0804">Transcription</keyword>
<keyword id="KW-0805">Transcription regulation</keyword>
<keyword id="KW-0810">Translation regulation</keyword>
<keyword id="KW-0813">Transport</keyword>
<feature type="chain" id="PRO_0000282542" description="Insulin-like growth factor 2 mRNA-binding protein 3-A">
    <location>
        <begin position="1"/>
        <end position="594"/>
    </location>
</feature>
<feature type="domain" description="RRM 1" evidence="4">
    <location>
        <begin position="2"/>
        <end position="75"/>
    </location>
</feature>
<feature type="domain" description="RRM 2" evidence="4">
    <location>
        <begin position="81"/>
        <end position="156"/>
    </location>
</feature>
<feature type="domain" description="KH 1" evidence="3">
    <location>
        <begin position="205"/>
        <end position="270"/>
    </location>
</feature>
<feature type="domain" description="KH 2" evidence="3">
    <location>
        <begin position="286"/>
        <end position="353"/>
    </location>
</feature>
<feature type="domain" description="KH 3" evidence="3">
    <location>
        <begin position="418"/>
        <end position="483"/>
    </location>
</feature>
<feature type="domain" description="KH 4" evidence="3">
    <location>
        <begin position="500"/>
        <end position="566"/>
    </location>
</feature>
<feature type="region of interest" description="Disordered" evidence="5">
    <location>
        <begin position="161"/>
        <end position="206"/>
    </location>
</feature>
<feature type="region of interest" description="Disordered" evidence="5">
    <location>
        <begin position="392"/>
        <end position="415"/>
    </location>
</feature>
<feature type="compositionally biased region" description="Low complexity" evidence="5">
    <location>
        <begin position="161"/>
        <end position="177"/>
    </location>
</feature>
<feature type="compositionally biased region" description="Low complexity" evidence="5">
    <location>
        <begin position="399"/>
        <end position="411"/>
    </location>
</feature>
<feature type="sequence conflict" description="In Ref. 1; AA sequence." evidence="13" ref="1">
    <original>T</original>
    <variation>A</variation>
    <location>
        <position position="160"/>
    </location>
</feature>
<feature type="sequence conflict" description="In Ref. 1; AA sequence." evidence="13" ref="1">
    <original>L</original>
    <variation>M</variation>
    <location>
        <position position="211"/>
    </location>
</feature>
<feature type="sequence conflict" description="In Ref. 1; AA sequence." evidence="13" ref="1">
    <original>G</original>
    <variation>T</variation>
    <location>
        <position position="222"/>
    </location>
</feature>
<feature type="sequence conflict" description="In Ref. 1; AA sequence." evidence="13" ref="1">
    <original>L</original>
    <variation>V</variation>
    <location>
        <position position="289"/>
    </location>
</feature>
<feature type="sequence conflict" description="In Ref. 1; AA sequence." evidence="13" ref="1">
    <original>L</original>
    <variation>I</variation>
    <location>
        <position position="487"/>
    </location>
</feature>
<reference key="1">
    <citation type="journal article" date="1998" name="Curr. Biol.">
        <title>A highly conserved RNA-binding protein for cytoplasmic mRNA localization in vertebrates.</title>
        <authorList>
            <person name="Deshler J.O."/>
            <person name="Highett M.I."/>
            <person name="Abramson T."/>
            <person name="Schnapp B.J."/>
        </authorList>
    </citation>
    <scope>NUCLEOTIDE SEQUENCE [MRNA]</scope>
    <scope>PROTEIN SEQUENCE OF 151-164; 210-223; 283-289 AND 487-496</scope>
    <scope>FUNCTION</scope>
    <scope>RNA-BINDING</scope>
</reference>
<reference key="2">
    <citation type="journal article" date="1998" name="Genes Dev.">
        <title>RNA-binding protein conserved in both microtubule- and microfilament-based RNA localization.</title>
        <authorList>
            <person name="Havin L."/>
            <person name="Git A."/>
            <person name="Elisha Z."/>
            <person name="Oberman F."/>
            <person name="Yaniv K."/>
            <person name="Schwartz S.P."/>
            <person name="Standart N."/>
            <person name="Yisraeli J.K."/>
        </authorList>
    </citation>
    <scope>NUCLEOTIDE SEQUENCE [MRNA]</scope>
    <scope>PROTEIN SEQUENCE OF 282-290; 442-453; 486-500 AND 506-518</scope>
    <scope>FUNCTION</scope>
    <scope>ASSOCIATION WITH MICROTUBULES</scope>
    <scope>RNA-BINDING</scope>
    <source>
        <tissue>Oocyte</tissue>
    </source>
</reference>
<reference key="3">
    <citation type="submission" date="2008-11" db="EMBL/GenBank/DDBJ databases">
        <authorList>
            <consortium name="NIH - Xenopus Gene Collection (XGC) project"/>
        </authorList>
    </citation>
    <scope>NUCLEOTIDE SEQUENCE [LARGE SCALE MRNA]</scope>
</reference>
<reference key="4">
    <citation type="journal article" date="2003" name="Gene">
        <title>Isolation of the B3 transcription factor of the Xenopus TFIIIA gene.</title>
        <authorList>
            <person name="Griffin D."/>
            <person name="Penberthy W.T."/>
            <person name="Lum H."/>
            <person name="Stein R.W."/>
            <person name="Taylor W.L."/>
        </authorList>
    </citation>
    <scope>PROTEIN SEQUENCE OF 151-181; 210-223; 291-300 AND 320-335</scope>
    <source>
        <tissue>Oocyte</tissue>
    </source>
</reference>
<reference key="5">
    <citation type="journal article" date="1992" name="Proc. Natl. Acad. Sci. U.S.A.">
        <title>A 69-kDa RNA-binding protein from Xenopus oocytes recognizes a common motif in two vegetally localized maternal mRNAs.</title>
        <authorList>
            <person name="Schwartz S.P."/>
            <person name="Aisenthal L."/>
            <person name="Elisha Z."/>
            <person name="Oberman F."/>
            <person name="Yisraeli J.K."/>
        </authorList>
    </citation>
    <scope>RNA-BINDING</scope>
</reference>
<reference key="6">
    <citation type="journal article" date="1995" name="EMBO J.">
        <title>Vg1 RNA binding protein mediates the association of Vg1 RNA with microtubules in Xenopus oocytes.</title>
        <authorList>
            <person name="Elisha Z."/>
            <person name="Havin L."/>
            <person name="Ringel I."/>
            <person name="Yisraeli J.K."/>
        </authorList>
    </citation>
    <scope>ASSOCIATION WITH MICROTUBULES</scope>
</reference>
<reference key="7">
    <citation type="journal article" date="1997" name="Science">
        <title>Localization of Xenopus Vg1 mRNA by Vera protein and the endoplasmic reticulum.</title>
        <authorList>
            <person name="Deshler J.O."/>
            <person name="Highett M.I."/>
            <person name="Schnapp B.J."/>
        </authorList>
    </citation>
    <scope>FUNCTION</scope>
    <scope>INTERACTION WITH TRAPA</scope>
    <scope>SUBCELLULAR LOCATION</scope>
    <scope>RNA-BINDING</scope>
</reference>
<reference key="8">
    <citation type="journal article" date="1999" name="Mech. Dev.">
        <title>Vg1 RBP intracellular distribution and evolutionarily conserved expression at multiple stages during development.</title>
        <authorList>
            <person name="Zhang Q."/>
            <person name="Yaniv K."/>
            <person name="Oberman F."/>
            <person name="Wolke U."/>
            <person name="Git A."/>
            <person name="Fromer M."/>
            <person name="Taylor W.L."/>
            <person name="Meyer D."/>
            <person name="Standart N."/>
            <person name="Raz E."/>
            <person name="Yisraeli J.K."/>
        </authorList>
    </citation>
    <scope>SUBCELLULAR LOCATION</scope>
    <scope>DEVELOPMENTAL STAGE</scope>
</reference>
<reference key="9">
    <citation type="journal article" date="2002" name="RNA">
        <title>The KH domains of Xenopus Vg1RBP mediate RNA binding and self-association.</title>
        <authorList>
            <person name="Git A."/>
            <person name="Standart N."/>
        </authorList>
    </citation>
    <scope>SUBUNIT</scope>
    <scope>RNA-BINDING</scope>
</reference>
<reference key="10">
    <citation type="journal article" date="2004" name="J. Cell Biol.">
        <title>Nuclear RNP complex assembly initiates cytoplasmic RNA localization.</title>
        <authorList>
            <person name="Kress T.L."/>
            <person name="Yoon Y.J."/>
            <person name="Mowry K.L."/>
        </authorList>
    </citation>
    <scope>FUNCTION</scope>
    <scope>IDENTIFICATION IN A MRNP COMPLEX WITH DAZAP1; STAU AND VGRBP60</scope>
    <scope>INTERACTION WITH VGRBP60</scope>
    <scope>SUBCELLULAR LOCATION</scope>
    <scope>RNA-BINDING</scope>
</reference>
<reference key="11">
    <citation type="journal article" date="2005" name="Biol. Cell">
        <title>VICKZ proteins: a multi-talented family of regulatory RNA-binding proteins.</title>
        <authorList>
            <person name="Yisraeli J.K."/>
        </authorList>
    </citation>
    <scope>REVIEW</scope>
</reference>
<accession>O73932</accession>
<accession>B7ZRK2</accession>
<comment type="function">
    <text evidence="1 2 8 10 11 12">RNA-binding protein that acts as a regulator of mRNA transport and localization. Binds to the RNA sequence motif 5'-UUCAC-3'. Preferentially binds to N6-methyladenosine (m6A)-containing mRNAs and increases their stability (By similarity). Mediates the specific association of Vg1 RNA to microtubules. Binds specifically to the vegetal localization elements (VLE or VgLE) in the 3'-UTR of Vg1 and VegT mRNAs. Binds to the Vg1 and VegT mRNAs in both the nucleus and the cytoplasm. May regulate mRNA translation (By similarity). Acts as a transcription regulator (By similarity). Binds to the 5'-[TA]GGTTACT-3' motif within element 3 of the TFIIIA gene promoter (By similarity).</text>
</comment>
<comment type="subunit">
    <text evidence="2 7 8 9 10 12">Homodimer and multimer (PubMed:12403469). Associates with microtubules (PubMed:7588639, PubMed:9620847). Interaction with a translocation machinery protein TRAPA of the endoplasmic reticulum (PubMed:9148809). Component of a mRNP complex, at least composed of DAZAP1, IGF2BP3, STAU and VgRBP60 (PubMed:15096527). The mRNP complex with DAZAP1, IGF2BP3, STAU and VgRBP60 is only found in the cytoplasm (PubMed:15096527). Interacts with a hnRNP 1 related RNA transport protein VgRBP60 both in the nucleus (in a RNA-independent manner) and the cytoplasm (in a RNA-dependent manner) (PubMed:15096527). Found in a B3 activator complex (By similarity).</text>
</comment>
<comment type="interaction">
    <interactant intactId="EBI-619004">
        <id>O73932</id>
    </interactant>
    <interactant intactId="EBI-7191347">
        <id>Q98SP8</id>
        <label>epabp-a</label>
    </interactant>
    <organismsDiffer>false</organismsDiffer>
    <experiments>2</experiments>
</comment>
<comment type="interaction">
    <interactant intactId="EBI-619004">
        <id>O73932</id>
    </interactant>
    <interactant intactId="EBI-8486848">
        <id>P45441</id>
        <label>ybx2-b</label>
    </interactant>
    <organismsDiffer>false</organismsDiffer>
    <experiments>2</experiments>
</comment>
<comment type="interaction">
    <interactant intactId="EBI-619004">
        <id>O73932</id>
    </interactant>
    <interactant intactId="EBI-8486828">
        <id>P17506</id>
    </interactant>
    <organismsDiffer>false</organismsDiffer>
    <experiments>4</experiments>
</comment>
<comment type="subcellular location">
    <subcellularLocation>
        <location>Nucleus</location>
    </subcellularLocation>
    <subcellularLocation>
        <location>Cytoplasm</location>
    </subcellularLocation>
    <subcellularLocation>
        <location>Endoplasmic reticulum</location>
    </subcellularLocation>
    <text>Accumulates along the vegetal cortex in oocytes as oogenesis progresses ('late pathway' for RNA localization). Colocalizes with Vg1 RNA along the vegetal cortex.</text>
</comment>
<comment type="developmental stage">
    <text evidence="6">Expressed throughout the oocyte development from stages I to VI (at protein level). Levels begin to increase in the developing nervous system at stage 12 (at protein level). At the neural tube stage, expression is detected throughout the developing neural epithelium and in the cells migrating out of the mesencephalon and rhombencephalon, eye, neural tube, otic vesicle, pronephros, branchial arches and blood islands (at protein level). Detected in low levels throughout early embryogenesis.</text>
</comment>
<comment type="domain">
    <text>The third and fourth KH domains are involved in RNA binding and self-association. Stable self-association requires RNA.</text>
</comment>
<comment type="similarity">
    <text evidence="13">Belongs to the RRM IMP/VICKZ family.</text>
</comment>
<proteinExistence type="evidence at protein level"/>
<protein>
    <recommendedName>
        <fullName>Insulin-like growth factor 2 mRNA-binding protein 3-A</fullName>
        <shortName>IGF2 mRNA-binding protein 3-A</shortName>
        <shortName>IMP-3-A</shortName>
    </recommendedName>
    <alternativeName>
        <fullName>69 kDa RNA-binding protein A</fullName>
    </alternativeName>
    <alternativeName>
        <fullName>IGF-II mRNA-binding protein 3-A</fullName>
    </alternativeName>
    <alternativeName>
        <fullName>KH domain-containing transcription factor B3-A</fullName>
    </alternativeName>
    <alternativeName>
        <fullName>RNA-binding protein Vera-A</fullName>
    </alternativeName>
    <alternativeName>
        <fullName>Trans-acting factor B3-A</fullName>
    </alternativeName>
    <alternativeName>
        <fullName>VICKZ family member 3-A</fullName>
    </alternativeName>
    <alternativeName>
        <fullName>VLE-binding protein A</fullName>
    </alternativeName>
    <alternativeName>
        <fullName>Vg1 RNA-binding protein A</fullName>
        <shortName>Vg1 RBP-A</shortName>
    </alternativeName>
    <alternativeName>
        <fullName>Vg1 localization element binding protein A</fullName>
    </alternativeName>
    <alternativeName>
        <fullName>VgLE-binding and ER association protein A</fullName>
    </alternativeName>
</protein>
<sequence>MNKLYIGNLSENVSPTDLESLFKESKIPFTGQFLVKSGYAFVDCPDETWAMKAIDTLSGKVELHGKVIEVEHSVPKRQRSRKLQIRNIPPHLQWEVLDSLLAQYGTVENCEQVNTESETAVVNVTYANKEHARQGLEKLNGYQLENYSLKVTYIPDEMATPQAPSQQLQQQPQQQHPQGRRGFGQRGPARQGSPGAAARPKPQTEVPLRMLVPTQFVGAIIGKEGATIRNITKQTQSKIDIHRKENAGAAEKPITIHSTPEGCSAACKIIMEIMQKEAQDTKFTEEIPLKILAHNNFVGRLIGKEGRNLKKIEQDTDTKITISPLQDLTLYNPERTITVKGSIEPCAKAEEEIMKKIRESYENDIAAMNLQAHLIPGLNLNALGLFPSSSSGMPPPSVGVPSPTSSTSYPPFGQQPESETVHLFIPALAVGAIIGKQGQHIKQLSRFAGASIKIAPAEGPDAKLRMVIITGPPEAQFKAQGRIYGKLKEENFFGPKEEVKLETHIKVPSYAAGRVIGKGGKTVNELQNLTSAEVVVPRDQTPDENDEVVVKITGHFYASQLAQRKIQEILAQVRRQQQQQQKTVQSGQPQPRRK</sequence>
<dbReference type="EMBL" id="AF055923">
    <property type="protein sequence ID" value="AAC41285.1"/>
    <property type="molecule type" value="mRNA"/>
</dbReference>
<dbReference type="EMBL" id="AF064634">
    <property type="protein sequence ID" value="AAC18598.1"/>
    <property type="molecule type" value="mRNA"/>
</dbReference>
<dbReference type="EMBL" id="BC170196">
    <property type="protein sequence ID" value="AAI70196.1"/>
    <property type="molecule type" value="mRNA"/>
</dbReference>
<dbReference type="EMBL" id="BC170224">
    <property type="protein sequence ID" value="AAI70224.1"/>
    <property type="molecule type" value="mRNA"/>
</dbReference>
<dbReference type="EMBL" id="BC170477">
    <property type="protein sequence ID" value="AAI70477.1"/>
    <property type="molecule type" value="mRNA"/>
</dbReference>
<dbReference type="EMBL" id="BC170479">
    <property type="protein sequence ID" value="AAI70479.1"/>
    <property type="molecule type" value="mRNA"/>
</dbReference>
<dbReference type="RefSeq" id="NP_001081752.1">
    <property type="nucleotide sequence ID" value="NM_001088283.1"/>
</dbReference>
<dbReference type="SMR" id="O73932"/>
<dbReference type="BioGRID" id="98895">
    <property type="interactions" value="3"/>
</dbReference>
<dbReference type="IntAct" id="O73932">
    <property type="interactions" value="11"/>
</dbReference>
<dbReference type="MINT" id="O73932"/>
<dbReference type="GeneID" id="394293"/>
<dbReference type="KEGG" id="xla:394293"/>
<dbReference type="AGR" id="Xenbase:XB-GENE-864935"/>
<dbReference type="CTD" id="394293"/>
<dbReference type="Xenbase" id="XB-GENE-864935">
    <property type="gene designation" value="igf2bp3.L"/>
</dbReference>
<dbReference type="OMA" id="CPDEGWA"/>
<dbReference type="OrthoDB" id="752362at2759"/>
<dbReference type="CD-CODE" id="51D14917">
    <property type="entry name" value="L-bodies"/>
</dbReference>
<dbReference type="Proteomes" id="UP000186698">
    <property type="component" value="Chromosome 6L"/>
</dbReference>
<dbReference type="Bgee" id="394293">
    <property type="expression patterns" value="Expressed in gastrula and 12 other cell types or tissues"/>
</dbReference>
<dbReference type="GO" id="GO:0005737">
    <property type="term" value="C:cytoplasm"/>
    <property type="evidence" value="ECO:0000318"/>
    <property type="project" value="GO_Central"/>
</dbReference>
<dbReference type="GO" id="GO:0005829">
    <property type="term" value="C:cytosol"/>
    <property type="evidence" value="ECO:0000318"/>
    <property type="project" value="GO_Central"/>
</dbReference>
<dbReference type="GO" id="GO:0005783">
    <property type="term" value="C:endoplasmic reticulum"/>
    <property type="evidence" value="ECO:0007669"/>
    <property type="project" value="UniProtKB-SubCell"/>
</dbReference>
<dbReference type="GO" id="GO:0005634">
    <property type="term" value="C:nucleus"/>
    <property type="evidence" value="ECO:0000318"/>
    <property type="project" value="GO_Central"/>
</dbReference>
<dbReference type="GO" id="GO:1990904">
    <property type="term" value="C:ribonucleoprotein complex"/>
    <property type="evidence" value="ECO:0000353"/>
    <property type="project" value="UniProtKB"/>
</dbReference>
<dbReference type="GO" id="GO:0003677">
    <property type="term" value="F:DNA binding"/>
    <property type="evidence" value="ECO:0007669"/>
    <property type="project" value="UniProtKB-KW"/>
</dbReference>
<dbReference type="GO" id="GO:0003730">
    <property type="term" value="F:mRNA 3'-UTR binding"/>
    <property type="evidence" value="ECO:0000314"/>
    <property type="project" value="UniProtKB"/>
</dbReference>
<dbReference type="GO" id="GO:0070934">
    <property type="term" value="P:CRD-mediated mRNA stabilization"/>
    <property type="evidence" value="ECO:0000318"/>
    <property type="project" value="GO_Central"/>
</dbReference>
<dbReference type="GO" id="GO:0051028">
    <property type="term" value="P:mRNA transport"/>
    <property type="evidence" value="ECO:0007669"/>
    <property type="project" value="UniProtKB-KW"/>
</dbReference>
<dbReference type="GO" id="GO:0007399">
    <property type="term" value="P:nervous system development"/>
    <property type="evidence" value="ECO:0000318"/>
    <property type="project" value="GO_Central"/>
</dbReference>
<dbReference type="GO" id="GO:0006417">
    <property type="term" value="P:regulation of translation"/>
    <property type="evidence" value="ECO:0007669"/>
    <property type="project" value="UniProtKB-KW"/>
</dbReference>
<dbReference type="CDD" id="cd22490">
    <property type="entry name" value="KH-I_IGF2BP1_rpt1"/>
    <property type="match status" value="1"/>
</dbReference>
<dbReference type="CDD" id="cd22498">
    <property type="entry name" value="KH-I_IGF2BP3_rpt3"/>
    <property type="match status" value="1"/>
</dbReference>
<dbReference type="CDD" id="cd12627">
    <property type="entry name" value="RRM1_IGF2BP3"/>
    <property type="match status" value="1"/>
</dbReference>
<dbReference type="CDD" id="cd12630">
    <property type="entry name" value="RRM2_IGF2BP3"/>
    <property type="match status" value="1"/>
</dbReference>
<dbReference type="FunFam" id="3.30.70.330:FF:000203">
    <property type="entry name" value="insulin-like growth factor 2 mRNA-binding protein 1"/>
    <property type="match status" value="1"/>
</dbReference>
<dbReference type="FunFam" id="3.30.310.210:FF:000001">
    <property type="entry name" value="insulin-like growth factor 2 mRNA-binding protein 1 isoform X1"/>
    <property type="match status" value="1"/>
</dbReference>
<dbReference type="FunFam" id="3.30.1370.10:FF:000026">
    <property type="entry name" value="Insulin-like growth factor 2 mRNA-binding protein 3"/>
    <property type="match status" value="1"/>
</dbReference>
<dbReference type="FunFam" id="3.30.1370.10:FF:000027">
    <property type="entry name" value="insulin-like growth factor 2 mRNA-binding protein 3 isoform X1"/>
    <property type="match status" value="1"/>
</dbReference>
<dbReference type="FunFam" id="3.30.70.330:FF:000099">
    <property type="entry name" value="insulin-like growth factor 2 mRNA-binding protein 3 isoform X1"/>
    <property type="match status" value="1"/>
</dbReference>
<dbReference type="Gene3D" id="3.30.310.210">
    <property type="match status" value="1"/>
</dbReference>
<dbReference type="Gene3D" id="3.30.70.330">
    <property type="match status" value="2"/>
</dbReference>
<dbReference type="Gene3D" id="3.30.1370.10">
    <property type="entry name" value="K Homology domain, type 1"/>
    <property type="match status" value="2"/>
</dbReference>
<dbReference type="InterPro" id="IPR004087">
    <property type="entry name" value="KH_dom"/>
</dbReference>
<dbReference type="InterPro" id="IPR004088">
    <property type="entry name" value="KH_dom_type_1"/>
</dbReference>
<dbReference type="InterPro" id="IPR036612">
    <property type="entry name" value="KH_dom_type_1_sf"/>
</dbReference>
<dbReference type="InterPro" id="IPR012677">
    <property type="entry name" value="Nucleotide-bd_a/b_plait_sf"/>
</dbReference>
<dbReference type="InterPro" id="IPR035979">
    <property type="entry name" value="RBD_domain_sf"/>
</dbReference>
<dbReference type="InterPro" id="IPR000504">
    <property type="entry name" value="RRM_dom"/>
</dbReference>
<dbReference type="PANTHER" id="PTHR10288">
    <property type="entry name" value="KH DOMAIN CONTAINING RNA BINDING PROTEIN"/>
    <property type="match status" value="1"/>
</dbReference>
<dbReference type="Pfam" id="PF00013">
    <property type="entry name" value="KH_1"/>
    <property type="match status" value="4"/>
</dbReference>
<dbReference type="Pfam" id="PF00076">
    <property type="entry name" value="RRM_1"/>
    <property type="match status" value="2"/>
</dbReference>
<dbReference type="SMART" id="SM00322">
    <property type="entry name" value="KH"/>
    <property type="match status" value="4"/>
</dbReference>
<dbReference type="SMART" id="SM00360">
    <property type="entry name" value="RRM"/>
    <property type="match status" value="2"/>
</dbReference>
<dbReference type="SUPFAM" id="SSF54791">
    <property type="entry name" value="Eukaryotic type KH-domain (KH-domain type I)"/>
    <property type="match status" value="4"/>
</dbReference>
<dbReference type="SUPFAM" id="SSF54928">
    <property type="entry name" value="RNA-binding domain, RBD"/>
    <property type="match status" value="1"/>
</dbReference>
<dbReference type="PROSITE" id="PS50084">
    <property type="entry name" value="KH_TYPE_1"/>
    <property type="match status" value="4"/>
</dbReference>
<dbReference type="PROSITE" id="PS50102">
    <property type="entry name" value="RRM"/>
    <property type="match status" value="2"/>
</dbReference>
<organism>
    <name type="scientific">Xenopus laevis</name>
    <name type="common">African clawed frog</name>
    <dbReference type="NCBI Taxonomy" id="8355"/>
    <lineage>
        <taxon>Eukaryota</taxon>
        <taxon>Metazoa</taxon>
        <taxon>Chordata</taxon>
        <taxon>Craniata</taxon>
        <taxon>Vertebrata</taxon>
        <taxon>Euteleostomi</taxon>
        <taxon>Amphibia</taxon>
        <taxon>Batrachia</taxon>
        <taxon>Anura</taxon>
        <taxon>Pipoidea</taxon>
        <taxon>Pipidae</taxon>
        <taxon>Xenopodinae</taxon>
        <taxon>Xenopus</taxon>
        <taxon>Xenopus</taxon>
    </lineage>
</organism>
<evidence type="ECO:0000250" key="1">
    <source>
        <dbReference type="UniProtKB" id="O00425"/>
    </source>
</evidence>
<evidence type="ECO:0000250" key="2">
    <source>
        <dbReference type="UniProtKB" id="O57526"/>
    </source>
</evidence>
<evidence type="ECO:0000255" key="3">
    <source>
        <dbReference type="PROSITE-ProRule" id="PRU00117"/>
    </source>
</evidence>
<evidence type="ECO:0000255" key="4">
    <source>
        <dbReference type="PROSITE-ProRule" id="PRU00176"/>
    </source>
</evidence>
<evidence type="ECO:0000256" key="5">
    <source>
        <dbReference type="SAM" id="MobiDB-lite"/>
    </source>
</evidence>
<evidence type="ECO:0000269" key="6">
    <source>
    </source>
</evidence>
<evidence type="ECO:0000269" key="7">
    <source>
    </source>
</evidence>
<evidence type="ECO:0000269" key="8">
    <source>
    </source>
</evidence>
<evidence type="ECO:0000269" key="9">
    <source>
    </source>
</evidence>
<evidence type="ECO:0000269" key="10">
    <source>
    </source>
</evidence>
<evidence type="ECO:0000269" key="11">
    <source>
    </source>
</evidence>
<evidence type="ECO:0000269" key="12">
    <source>
    </source>
</evidence>
<evidence type="ECO:0000305" key="13"/>
<gene>
    <name type="primary">igf2bp3-a</name>
    <name type="synonym">vera-a</name>
    <name type="synonym">vickz3-a</name>
</gene>
<name>IF23A_XENLA</name>